<dbReference type="EC" id="1.12.98.2" evidence="1"/>
<dbReference type="EMBL" id="CP000745">
    <property type="protein sequence ID" value="ABR66192.1"/>
    <property type="molecule type" value="Genomic_DNA"/>
</dbReference>
<dbReference type="SMR" id="A6VIB6"/>
<dbReference type="STRING" id="426368.MmarC7_1126"/>
<dbReference type="KEGG" id="mmz:MmarC7_1126"/>
<dbReference type="eggNOG" id="arCOG03196">
    <property type="taxonomic scope" value="Archaea"/>
</dbReference>
<dbReference type="HOGENOM" id="CLU_772960_0_0_2"/>
<dbReference type="OrthoDB" id="113982at2157"/>
<dbReference type="UniPathway" id="UPA00640">
    <property type="reaction ID" value="UER00696"/>
</dbReference>
<dbReference type="GO" id="GO:0047068">
    <property type="term" value="F:N5,N10-methenyltetrahydromethanopterin hydrogenase activity"/>
    <property type="evidence" value="ECO:0007669"/>
    <property type="project" value="UniProtKB-UniRule"/>
</dbReference>
<dbReference type="GO" id="GO:0004735">
    <property type="term" value="F:pyrroline-5-carboxylate reductase activity"/>
    <property type="evidence" value="ECO:0007669"/>
    <property type="project" value="TreeGrafter"/>
</dbReference>
<dbReference type="GO" id="GO:0055129">
    <property type="term" value="P:L-proline biosynthetic process"/>
    <property type="evidence" value="ECO:0007669"/>
    <property type="project" value="TreeGrafter"/>
</dbReference>
<dbReference type="GO" id="GO:0019386">
    <property type="term" value="P:methanogenesis, from carbon dioxide"/>
    <property type="evidence" value="ECO:0007669"/>
    <property type="project" value="UniProtKB-UniRule"/>
</dbReference>
<dbReference type="GO" id="GO:0006730">
    <property type="term" value="P:one-carbon metabolic process"/>
    <property type="evidence" value="ECO:0007669"/>
    <property type="project" value="UniProtKB-UniRule"/>
</dbReference>
<dbReference type="Gene3D" id="1.20.120.1300">
    <property type="entry name" value="Hmd, C-terminal helical subdomain"/>
    <property type="match status" value="1"/>
</dbReference>
<dbReference type="Gene3D" id="3.40.50.720">
    <property type="entry name" value="NAD(P)-binding Rossmann-like Domain"/>
    <property type="match status" value="1"/>
</dbReference>
<dbReference type="HAMAP" id="MF_01090">
    <property type="entry name" value="HMD"/>
    <property type="match status" value="1"/>
</dbReference>
<dbReference type="InterPro" id="IPR008927">
    <property type="entry name" value="6-PGluconate_DH-like_C_sf"/>
</dbReference>
<dbReference type="InterPro" id="IPR010062">
    <property type="entry name" value="HMD"/>
</dbReference>
<dbReference type="InterPro" id="IPR004889">
    <property type="entry name" value="HMD_C"/>
</dbReference>
<dbReference type="InterPro" id="IPR038182">
    <property type="entry name" value="HMD_C_sf"/>
</dbReference>
<dbReference type="InterPro" id="IPR055205">
    <property type="entry name" value="HMD_N"/>
</dbReference>
<dbReference type="InterPro" id="IPR024190">
    <property type="entry name" value="METHMP_Hmd"/>
</dbReference>
<dbReference type="InterPro" id="IPR036291">
    <property type="entry name" value="NAD(P)-bd_dom_sf"/>
</dbReference>
<dbReference type="NCBIfam" id="TIGR01723">
    <property type="entry name" value="hmd_TIGR"/>
    <property type="match status" value="1"/>
</dbReference>
<dbReference type="PANTHER" id="PTHR11645">
    <property type="entry name" value="PYRROLINE-5-CARBOXYLATE REDUCTASE"/>
    <property type="match status" value="1"/>
</dbReference>
<dbReference type="PANTHER" id="PTHR11645:SF0">
    <property type="entry name" value="PYRROLINE-5-CARBOXYLATE REDUCTASE 3"/>
    <property type="match status" value="1"/>
</dbReference>
<dbReference type="Pfam" id="PF03201">
    <property type="entry name" value="HMD"/>
    <property type="match status" value="1"/>
</dbReference>
<dbReference type="Pfam" id="PF22616">
    <property type="entry name" value="HMD_N"/>
    <property type="match status" value="1"/>
</dbReference>
<dbReference type="PIRSF" id="PIRSF016158">
    <property type="entry name" value="HMD"/>
    <property type="match status" value="1"/>
</dbReference>
<dbReference type="PIRSF" id="PIRSF500165">
    <property type="entry name" value="HMDI"/>
    <property type="match status" value="1"/>
</dbReference>
<dbReference type="SUPFAM" id="SSF48179">
    <property type="entry name" value="6-phosphogluconate dehydrogenase C-terminal domain-like"/>
    <property type="match status" value="1"/>
</dbReference>
<dbReference type="SUPFAM" id="SSF51735">
    <property type="entry name" value="NAD(P)-binding Rossmann-fold domains"/>
    <property type="match status" value="1"/>
</dbReference>
<sequence>MKVAILGAGCYRTHAASGITNFSRAAQVAKEAGMPEIAMTHSTITMGAELLHLIPEITEVVVSDPCFGEEPGMIVLDQFDYKAVMEAHLAGEAEKVMPEIRAAVTAKAKETPKPPKGCIHFVHPETIGLKVTASDVEAVKDADIVITWLPKGGSQPAIIEKFASEIKKGAIVTHACTIPTPKFAKIFKDLGRDDLNIIAYHPGAVPENKGQAFLSEGLADAEKVEEFYCIAKAARGEAFKMPAKLISPVCDMGSAVTAPVYAGILAYRDAVTQILGAPADFAQMMADEAITQLLDLMRSEGIKNMEDKLNPKALTGTADSMCFGPLADILPASLKVLEKHANENKCECGNSIKP</sequence>
<organism>
    <name type="scientific">Methanococcus maripaludis (strain C7 / ATCC BAA-1331)</name>
    <dbReference type="NCBI Taxonomy" id="426368"/>
    <lineage>
        <taxon>Archaea</taxon>
        <taxon>Methanobacteriati</taxon>
        <taxon>Methanobacteriota</taxon>
        <taxon>Methanomada group</taxon>
        <taxon>Methanococci</taxon>
        <taxon>Methanococcales</taxon>
        <taxon>Methanococcaceae</taxon>
        <taxon>Methanococcus</taxon>
    </lineage>
</organism>
<comment type="function">
    <text evidence="1">Catalyzes the reversible reduction of methenyl-H(4)MPT(+) to methylene-H(4)MPT.</text>
</comment>
<comment type="catalytic activity">
    <reaction evidence="1">
        <text>5,10-methenyl-5,6,7,8-tetrahydromethanopterin + H2 = 5,10-methylenetetrahydromethanopterin + H(+)</text>
        <dbReference type="Rhea" id="RHEA:20017"/>
        <dbReference type="ChEBI" id="CHEBI:15378"/>
        <dbReference type="ChEBI" id="CHEBI:18276"/>
        <dbReference type="ChEBI" id="CHEBI:57818"/>
        <dbReference type="ChEBI" id="CHEBI:58337"/>
        <dbReference type="EC" id="1.12.98.2"/>
    </reaction>
</comment>
<comment type="pathway">
    <text evidence="1">One-carbon metabolism; methanogenesis from CO(2); 5,10-methylene-5,6,7,8-tetrahydromethanopterin from 5,10-methenyl-5,6,7,8-tetrahydromethanopterin (hydrogen route): step 1/1.</text>
</comment>
<comment type="similarity">
    <text evidence="1">Belongs to the HMD family.</text>
</comment>
<keyword id="KW-0484">Methanogenesis</keyword>
<keyword id="KW-0554">One-carbon metabolism</keyword>
<keyword id="KW-0560">Oxidoreductase</keyword>
<proteinExistence type="inferred from homology"/>
<feature type="chain" id="PRO_1000149885" description="5,10-methenyltetrahydromethanopterin hydrogenase">
    <location>
        <begin position="1"/>
        <end position="354"/>
    </location>
</feature>
<reference key="1">
    <citation type="submission" date="2007-06" db="EMBL/GenBank/DDBJ databases">
        <title>Complete sequence of Methanococcus maripaludis C7.</title>
        <authorList>
            <consortium name="US DOE Joint Genome Institute"/>
            <person name="Copeland A."/>
            <person name="Lucas S."/>
            <person name="Lapidus A."/>
            <person name="Barry K."/>
            <person name="Glavina del Rio T."/>
            <person name="Dalin E."/>
            <person name="Tice H."/>
            <person name="Pitluck S."/>
            <person name="Clum A."/>
            <person name="Schmutz J."/>
            <person name="Larimer F."/>
            <person name="Land M."/>
            <person name="Hauser L."/>
            <person name="Kyrpides N."/>
            <person name="Anderson I."/>
            <person name="Sieprawska-Lupa M."/>
            <person name="Whitman W.B."/>
            <person name="Richardson P."/>
        </authorList>
    </citation>
    <scope>NUCLEOTIDE SEQUENCE [LARGE SCALE GENOMIC DNA]</scope>
    <source>
        <strain>C7 / ATCC BAA-1331</strain>
    </source>
</reference>
<protein>
    <recommendedName>
        <fullName evidence="1">5,10-methenyltetrahydromethanopterin hydrogenase</fullName>
        <ecNumber evidence="1">1.12.98.2</ecNumber>
    </recommendedName>
    <alternativeName>
        <fullName evidence="1">H(2)-dependent methylene-H(4)MPT dehydrogenase</fullName>
    </alternativeName>
    <alternativeName>
        <fullName evidence="1">H(2)-forming N(5),N(10)-methylenetetrahydromethanopterin dehydrogenase</fullName>
    </alternativeName>
    <alternativeName>
        <fullName evidence="1">N(5),N(10)-methenyltetrahydromethanopterin hydrogenase</fullName>
    </alternativeName>
</protein>
<accession>A6VIB6</accession>
<gene>
    <name evidence="1" type="primary">hmd</name>
    <name type="ordered locus">MmarC7_1126</name>
</gene>
<evidence type="ECO:0000255" key="1">
    <source>
        <dbReference type="HAMAP-Rule" id="MF_01090"/>
    </source>
</evidence>
<name>HMD_METM7</name>